<protein>
    <recommendedName>
        <fullName evidence="1">UvrABC system protein C</fullName>
        <shortName evidence="1">Protein UvrC</shortName>
    </recommendedName>
    <alternativeName>
        <fullName evidence="1">Excinuclease ABC subunit C</fullName>
    </alternativeName>
</protein>
<proteinExistence type="inferred from homology"/>
<gene>
    <name evidence="1" type="primary">uvrC</name>
    <name type="ordered locus">SAR1119</name>
</gene>
<accession>Q6GHT9</accession>
<organism>
    <name type="scientific">Staphylococcus aureus (strain MRSA252)</name>
    <dbReference type="NCBI Taxonomy" id="282458"/>
    <lineage>
        <taxon>Bacteria</taxon>
        <taxon>Bacillati</taxon>
        <taxon>Bacillota</taxon>
        <taxon>Bacilli</taxon>
        <taxon>Bacillales</taxon>
        <taxon>Staphylococcaceae</taxon>
        <taxon>Staphylococcus</taxon>
    </lineage>
</organism>
<name>UVRC_STAAR</name>
<keyword id="KW-0963">Cytoplasm</keyword>
<keyword id="KW-0227">DNA damage</keyword>
<keyword id="KW-0228">DNA excision</keyword>
<keyword id="KW-0234">DNA repair</keyword>
<keyword id="KW-0267">Excision nuclease</keyword>
<keyword id="KW-0742">SOS response</keyword>
<evidence type="ECO:0000255" key="1">
    <source>
        <dbReference type="HAMAP-Rule" id="MF_00203"/>
    </source>
</evidence>
<sequence length="593" mass="68644">MEDYKKRIKNKLNVVPMEPGCYLMKDRNDQVIYVGKAKKLRNRLRSYFTGAHDAKTTRLVGEIRRFEFIVTSSETESLLLELNLIKQYQPRYNILLKDDKSYPFIKITKEKYPRLLVTRTVKQGTGKYFGPYPNAYSAQETKKLLDRIYPYRKCDKMPDKLCLYYHIGQCLGPCVYDVDLSKYAQMTKEITDFLNGEDKTILKSLEERMLTASESLDFERAKEYRDLIQHIQNLTNKQKIMSSDKTIRDVFGYSVDKGWMCIQVFFIRQGNMIKRDTTMIPLQQTEEEEFYTFIGQFYSLNQHILPKEVHVPRNLDKEMIQSVVDTKIVQPARGPKKDMVDLAAHNAKVSLNNKFELISRDESRTIKAIEELGTQMGIQTPIRIEAFDNSNIQGVDPVSAMVTFVDGKPDKKNYRKYKIKTVKGPDDYKSMREVVRRRYSRVLNEGLPLPDLIIVDGGKGHMNGVIDVLQNELGLDIPVAGLQKNDKHQTSELLYGASAEIVPLKKNSQAFYLLHRIQDEVHRFAITFHRQTRQKTGLKSILDDIDGIGSKRKTLLLRSFGSIKKMKEATLEDFKNIGIPENVAKNLHEQLHK</sequence>
<feature type="chain" id="PRO_0000138339" description="UvrABC system protein C">
    <location>
        <begin position="1"/>
        <end position="593"/>
    </location>
</feature>
<feature type="domain" description="GIY-YIG" evidence="1">
    <location>
        <begin position="17"/>
        <end position="94"/>
    </location>
</feature>
<feature type="domain" description="UVR" evidence="1">
    <location>
        <begin position="199"/>
        <end position="234"/>
    </location>
</feature>
<comment type="function">
    <text evidence="1">The UvrABC repair system catalyzes the recognition and processing of DNA lesions. UvrC both incises the 5' and 3' sides of the lesion. The N-terminal half is responsible for the 3' incision and the C-terminal half is responsible for the 5' incision.</text>
</comment>
<comment type="subunit">
    <text evidence="1">Interacts with UvrB in an incision complex.</text>
</comment>
<comment type="subcellular location">
    <subcellularLocation>
        <location evidence="1">Cytoplasm</location>
    </subcellularLocation>
</comment>
<comment type="similarity">
    <text evidence="1">Belongs to the UvrC family.</text>
</comment>
<reference key="1">
    <citation type="journal article" date="2004" name="Proc. Natl. Acad. Sci. U.S.A.">
        <title>Complete genomes of two clinical Staphylococcus aureus strains: evidence for the rapid evolution of virulence and drug resistance.</title>
        <authorList>
            <person name="Holden M.T.G."/>
            <person name="Feil E.J."/>
            <person name="Lindsay J.A."/>
            <person name="Peacock S.J."/>
            <person name="Day N.P.J."/>
            <person name="Enright M.C."/>
            <person name="Foster T.J."/>
            <person name="Moore C.E."/>
            <person name="Hurst L."/>
            <person name="Atkin R."/>
            <person name="Barron A."/>
            <person name="Bason N."/>
            <person name="Bentley S.D."/>
            <person name="Chillingworth C."/>
            <person name="Chillingworth T."/>
            <person name="Churcher C."/>
            <person name="Clark L."/>
            <person name="Corton C."/>
            <person name="Cronin A."/>
            <person name="Doggett J."/>
            <person name="Dowd L."/>
            <person name="Feltwell T."/>
            <person name="Hance Z."/>
            <person name="Harris B."/>
            <person name="Hauser H."/>
            <person name="Holroyd S."/>
            <person name="Jagels K."/>
            <person name="James K.D."/>
            <person name="Lennard N."/>
            <person name="Line A."/>
            <person name="Mayes R."/>
            <person name="Moule S."/>
            <person name="Mungall K."/>
            <person name="Ormond D."/>
            <person name="Quail M.A."/>
            <person name="Rabbinowitsch E."/>
            <person name="Rutherford K.M."/>
            <person name="Sanders M."/>
            <person name="Sharp S."/>
            <person name="Simmonds M."/>
            <person name="Stevens K."/>
            <person name="Whitehead S."/>
            <person name="Barrell B.G."/>
            <person name="Spratt B.G."/>
            <person name="Parkhill J."/>
        </authorList>
    </citation>
    <scope>NUCLEOTIDE SEQUENCE [LARGE SCALE GENOMIC DNA]</scope>
    <source>
        <strain>MRSA252</strain>
    </source>
</reference>
<dbReference type="EMBL" id="BX571856">
    <property type="protein sequence ID" value="CAG40122.1"/>
    <property type="molecule type" value="Genomic_DNA"/>
</dbReference>
<dbReference type="RefSeq" id="WP_000390514.1">
    <property type="nucleotide sequence ID" value="NC_002952.2"/>
</dbReference>
<dbReference type="SMR" id="Q6GHT9"/>
<dbReference type="KEGG" id="sar:SAR1119"/>
<dbReference type="HOGENOM" id="CLU_014841_3_2_9"/>
<dbReference type="Proteomes" id="UP000000596">
    <property type="component" value="Chromosome"/>
</dbReference>
<dbReference type="GO" id="GO:0005737">
    <property type="term" value="C:cytoplasm"/>
    <property type="evidence" value="ECO:0007669"/>
    <property type="project" value="UniProtKB-SubCell"/>
</dbReference>
<dbReference type="GO" id="GO:0009380">
    <property type="term" value="C:excinuclease repair complex"/>
    <property type="evidence" value="ECO:0007669"/>
    <property type="project" value="InterPro"/>
</dbReference>
<dbReference type="GO" id="GO:0003677">
    <property type="term" value="F:DNA binding"/>
    <property type="evidence" value="ECO:0007669"/>
    <property type="project" value="UniProtKB-UniRule"/>
</dbReference>
<dbReference type="GO" id="GO:0009381">
    <property type="term" value="F:excinuclease ABC activity"/>
    <property type="evidence" value="ECO:0007669"/>
    <property type="project" value="UniProtKB-UniRule"/>
</dbReference>
<dbReference type="GO" id="GO:0006289">
    <property type="term" value="P:nucleotide-excision repair"/>
    <property type="evidence" value="ECO:0007669"/>
    <property type="project" value="UniProtKB-UniRule"/>
</dbReference>
<dbReference type="GO" id="GO:0009432">
    <property type="term" value="P:SOS response"/>
    <property type="evidence" value="ECO:0007669"/>
    <property type="project" value="UniProtKB-UniRule"/>
</dbReference>
<dbReference type="CDD" id="cd10434">
    <property type="entry name" value="GIY-YIG_UvrC_Cho"/>
    <property type="match status" value="1"/>
</dbReference>
<dbReference type="FunFam" id="3.30.420.340:FF:000002">
    <property type="entry name" value="UvrABC system protein C"/>
    <property type="match status" value="1"/>
</dbReference>
<dbReference type="FunFam" id="3.40.1440.10:FF:000001">
    <property type="entry name" value="UvrABC system protein C"/>
    <property type="match status" value="1"/>
</dbReference>
<dbReference type="FunFam" id="4.10.860.10:FF:000007">
    <property type="entry name" value="UvrABC system protein C"/>
    <property type="match status" value="1"/>
</dbReference>
<dbReference type="Gene3D" id="1.10.150.20">
    <property type="entry name" value="5' to 3' exonuclease, C-terminal subdomain"/>
    <property type="match status" value="1"/>
</dbReference>
<dbReference type="Gene3D" id="3.40.1440.10">
    <property type="entry name" value="GIY-YIG endonuclease"/>
    <property type="match status" value="1"/>
</dbReference>
<dbReference type="Gene3D" id="4.10.860.10">
    <property type="entry name" value="UVR domain"/>
    <property type="match status" value="1"/>
</dbReference>
<dbReference type="Gene3D" id="3.30.420.340">
    <property type="entry name" value="UvrC, RNAse H endonuclease domain"/>
    <property type="match status" value="1"/>
</dbReference>
<dbReference type="HAMAP" id="MF_00203">
    <property type="entry name" value="UvrC"/>
    <property type="match status" value="1"/>
</dbReference>
<dbReference type="InterPro" id="IPR000305">
    <property type="entry name" value="GIY-YIG_endonuc"/>
</dbReference>
<dbReference type="InterPro" id="IPR035901">
    <property type="entry name" value="GIY-YIG_endonuc_sf"/>
</dbReference>
<dbReference type="InterPro" id="IPR047296">
    <property type="entry name" value="GIY-YIG_UvrC_Cho"/>
</dbReference>
<dbReference type="InterPro" id="IPR010994">
    <property type="entry name" value="RuvA_2-like"/>
</dbReference>
<dbReference type="InterPro" id="IPR001943">
    <property type="entry name" value="UVR_dom"/>
</dbReference>
<dbReference type="InterPro" id="IPR036876">
    <property type="entry name" value="UVR_dom_sf"/>
</dbReference>
<dbReference type="InterPro" id="IPR050066">
    <property type="entry name" value="UvrABC_protein_C"/>
</dbReference>
<dbReference type="InterPro" id="IPR004791">
    <property type="entry name" value="UvrC"/>
</dbReference>
<dbReference type="InterPro" id="IPR001162">
    <property type="entry name" value="UvrC_RNase_H_dom"/>
</dbReference>
<dbReference type="InterPro" id="IPR038476">
    <property type="entry name" value="UvrC_RNase_H_dom_sf"/>
</dbReference>
<dbReference type="NCBIfam" id="TIGR00194">
    <property type="entry name" value="uvrC"/>
    <property type="match status" value="1"/>
</dbReference>
<dbReference type="PANTHER" id="PTHR30562:SF1">
    <property type="entry name" value="UVRABC SYSTEM PROTEIN C"/>
    <property type="match status" value="1"/>
</dbReference>
<dbReference type="PANTHER" id="PTHR30562">
    <property type="entry name" value="UVRC/OXIDOREDUCTASE"/>
    <property type="match status" value="1"/>
</dbReference>
<dbReference type="Pfam" id="PF01541">
    <property type="entry name" value="GIY-YIG"/>
    <property type="match status" value="1"/>
</dbReference>
<dbReference type="Pfam" id="PF02151">
    <property type="entry name" value="UVR"/>
    <property type="match status" value="1"/>
</dbReference>
<dbReference type="Pfam" id="PF22920">
    <property type="entry name" value="UvrC_RNaseH"/>
    <property type="match status" value="1"/>
</dbReference>
<dbReference type="Pfam" id="PF08459">
    <property type="entry name" value="UvrC_RNaseH_dom"/>
    <property type="match status" value="1"/>
</dbReference>
<dbReference type="SMART" id="SM00465">
    <property type="entry name" value="GIYc"/>
    <property type="match status" value="1"/>
</dbReference>
<dbReference type="SUPFAM" id="SSF46600">
    <property type="entry name" value="C-terminal UvrC-binding domain of UvrB"/>
    <property type="match status" value="1"/>
</dbReference>
<dbReference type="SUPFAM" id="SSF82771">
    <property type="entry name" value="GIY-YIG endonuclease"/>
    <property type="match status" value="1"/>
</dbReference>
<dbReference type="SUPFAM" id="SSF47781">
    <property type="entry name" value="RuvA domain 2-like"/>
    <property type="match status" value="1"/>
</dbReference>
<dbReference type="PROSITE" id="PS50164">
    <property type="entry name" value="GIY_YIG"/>
    <property type="match status" value="1"/>
</dbReference>
<dbReference type="PROSITE" id="PS50151">
    <property type="entry name" value="UVR"/>
    <property type="match status" value="1"/>
</dbReference>
<dbReference type="PROSITE" id="PS50165">
    <property type="entry name" value="UVRC"/>
    <property type="match status" value="1"/>
</dbReference>